<proteinExistence type="evidence at protein level"/>
<name>ZNT6_HUMAN</name>
<dbReference type="EMBL" id="AK055663">
    <property type="protein sequence ID" value="BAB70980.1"/>
    <property type="molecule type" value="mRNA"/>
</dbReference>
<dbReference type="EMBL" id="AK304225">
    <property type="protein sequence ID" value="BAH14137.1"/>
    <property type="molecule type" value="mRNA"/>
</dbReference>
<dbReference type="EMBL" id="EF560719">
    <property type="protein sequence ID" value="ABQ59029.1"/>
    <property type="molecule type" value="mRNA"/>
</dbReference>
<dbReference type="EMBL" id="EF560726">
    <property type="protein sequence ID" value="ABQ59036.1"/>
    <property type="molecule type" value="mRNA"/>
</dbReference>
<dbReference type="EMBL" id="AL121653">
    <property type="status" value="NOT_ANNOTATED_CDS"/>
    <property type="molecule type" value="Genomic_DNA"/>
</dbReference>
<dbReference type="EMBL" id="AL121658">
    <property type="status" value="NOT_ANNOTATED_CDS"/>
    <property type="molecule type" value="Genomic_DNA"/>
</dbReference>
<dbReference type="EMBL" id="CH471053">
    <property type="protein sequence ID" value="EAX00456.1"/>
    <property type="molecule type" value="Genomic_DNA"/>
</dbReference>
<dbReference type="EMBL" id="BC032525">
    <property type="protein sequence ID" value="AAH32525.1"/>
    <property type="status" value="ALT_INIT"/>
    <property type="molecule type" value="mRNA"/>
</dbReference>
<dbReference type="EMBL" id="BC066903">
    <property type="protein sequence ID" value="AAH66903.1"/>
    <property type="molecule type" value="mRNA"/>
</dbReference>
<dbReference type="CCDS" id="CCDS1780.1">
    <molecule id="Q6NXT4-1"/>
</dbReference>
<dbReference type="CCDS" id="CCDS54341.1">
    <molecule id="Q6NXT4-2"/>
</dbReference>
<dbReference type="CCDS" id="CCDS54342.1">
    <molecule id="Q6NXT4-3"/>
</dbReference>
<dbReference type="CCDS" id="CCDS54343.1">
    <molecule id="Q6NXT4-4"/>
</dbReference>
<dbReference type="RefSeq" id="NP_001180442.1">
    <molecule id="Q6NXT4-2"/>
    <property type="nucleotide sequence ID" value="NM_001193513.3"/>
</dbReference>
<dbReference type="RefSeq" id="NP_001180443.1">
    <molecule id="Q6NXT4-3"/>
    <property type="nucleotide sequence ID" value="NM_001193514.3"/>
</dbReference>
<dbReference type="RefSeq" id="NP_001180444.1">
    <molecule id="Q6NXT4-4"/>
    <property type="nucleotide sequence ID" value="NM_001193515.3"/>
</dbReference>
<dbReference type="RefSeq" id="NP_060434.2">
    <molecule id="Q6NXT4-1"/>
    <property type="nucleotide sequence ID" value="NM_017964.4"/>
</dbReference>
<dbReference type="SMR" id="Q6NXT4"/>
<dbReference type="BioGRID" id="120806">
    <property type="interactions" value="124"/>
</dbReference>
<dbReference type="ComplexPortal" id="CPX-8361">
    <property type="entry name" value="ZNT5-ZNT6 proton-coupled zinc antiporter complex"/>
</dbReference>
<dbReference type="FunCoup" id="Q6NXT4">
    <property type="interactions" value="1546"/>
</dbReference>
<dbReference type="IntAct" id="Q6NXT4">
    <property type="interactions" value="57"/>
</dbReference>
<dbReference type="MINT" id="Q6NXT4"/>
<dbReference type="STRING" id="9606.ENSP00000368648"/>
<dbReference type="DrugBank" id="DB14533">
    <property type="generic name" value="Zinc chloride"/>
</dbReference>
<dbReference type="DrugBank" id="DB14548">
    <property type="generic name" value="Zinc sulfate, unspecified form"/>
</dbReference>
<dbReference type="TCDB" id="2.A.4.4.4">
    <property type="family name" value="the cation diffusion facilitator (cdf) family"/>
</dbReference>
<dbReference type="GlyGen" id="Q6NXT4">
    <property type="glycosylation" value="4 sites, 1 O-linked glycan (4 sites)"/>
</dbReference>
<dbReference type="iPTMnet" id="Q6NXT4"/>
<dbReference type="PhosphoSitePlus" id="Q6NXT4"/>
<dbReference type="SwissPalm" id="Q6NXT4"/>
<dbReference type="BioMuta" id="SLC30A6"/>
<dbReference type="DMDM" id="162416263"/>
<dbReference type="jPOST" id="Q6NXT4"/>
<dbReference type="MassIVE" id="Q6NXT4"/>
<dbReference type="PaxDb" id="9606-ENSP00000368648"/>
<dbReference type="PeptideAtlas" id="Q6NXT4"/>
<dbReference type="ProteomicsDB" id="66772">
    <molecule id="Q6NXT4-1"/>
</dbReference>
<dbReference type="ProteomicsDB" id="66773">
    <molecule id="Q6NXT4-2"/>
</dbReference>
<dbReference type="ProteomicsDB" id="66774">
    <molecule id="Q6NXT4-3"/>
</dbReference>
<dbReference type="ProteomicsDB" id="6994"/>
<dbReference type="Pumba" id="Q6NXT4"/>
<dbReference type="Antibodypedia" id="29149">
    <property type="antibodies" value="159 antibodies from 23 providers"/>
</dbReference>
<dbReference type="DNASU" id="55676"/>
<dbReference type="Ensembl" id="ENST00000282587.9">
    <molecule id="Q6NXT4-1"/>
    <property type="protein sequence ID" value="ENSP00000282587.5"/>
    <property type="gene ID" value="ENSG00000152683.14"/>
</dbReference>
<dbReference type="Ensembl" id="ENST00000357055.7">
    <molecule id="Q6NXT4-4"/>
    <property type="protein sequence ID" value="ENSP00000349563.4"/>
    <property type="gene ID" value="ENSG00000152683.14"/>
</dbReference>
<dbReference type="Ensembl" id="ENST00000379343.6">
    <molecule id="Q6NXT4-2"/>
    <property type="protein sequence ID" value="ENSP00000368648.2"/>
    <property type="gene ID" value="ENSG00000152683.14"/>
</dbReference>
<dbReference type="Ensembl" id="ENST00000435660.5">
    <molecule id="Q6NXT4-3"/>
    <property type="protein sequence ID" value="ENSP00000399005.1"/>
    <property type="gene ID" value="ENSG00000152683.14"/>
</dbReference>
<dbReference type="GeneID" id="55676"/>
<dbReference type="KEGG" id="hsa:55676"/>
<dbReference type="MANE-Select" id="ENST00000282587.9">
    <property type="protein sequence ID" value="ENSP00000282587.5"/>
    <property type="RefSeq nucleotide sequence ID" value="NM_017964.5"/>
    <property type="RefSeq protein sequence ID" value="NP_060434.2"/>
</dbReference>
<dbReference type="UCSC" id="uc002roe.3">
    <molecule id="Q6NXT4-1"/>
    <property type="organism name" value="human"/>
</dbReference>
<dbReference type="AGR" id="HGNC:19305"/>
<dbReference type="CTD" id="55676"/>
<dbReference type="DisGeNET" id="55676"/>
<dbReference type="GeneCards" id="SLC30A6"/>
<dbReference type="HGNC" id="HGNC:19305">
    <property type="gene designation" value="SLC30A6"/>
</dbReference>
<dbReference type="HPA" id="ENSG00000152683">
    <property type="expression patterns" value="Low tissue specificity"/>
</dbReference>
<dbReference type="MIM" id="611148">
    <property type="type" value="gene"/>
</dbReference>
<dbReference type="neXtProt" id="NX_Q6NXT4"/>
<dbReference type="OpenTargets" id="ENSG00000152683"/>
<dbReference type="PharmGKB" id="PA134923067"/>
<dbReference type="VEuPathDB" id="HostDB:ENSG00000152683"/>
<dbReference type="eggNOG" id="KOG1484">
    <property type="taxonomic scope" value="Eukaryota"/>
</dbReference>
<dbReference type="GeneTree" id="ENSGT00940000159934"/>
<dbReference type="HOGENOM" id="CLU_034201_0_0_1"/>
<dbReference type="InParanoid" id="Q6NXT4"/>
<dbReference type="OMA" id="NIVCTGF"/>
<dbReference type="OrthoDB" id="5382797at2759"/>
<dbReference type="PAN-GO" id="Q6NXT4">
    <property type="GO annotations" value="3 GO annotations based on evolutionary models"/>
</dbReference>
<dbReference type="PhylomeDB" id="Q6NXT4"/>
<dbReference type="TreeFam" id="TF313167"/>
<dbReference type="PathwayCommons" id="Q6NXT4"/>
<dbReference type="SignaLink" id="Q6NXT4"/>
<dbReference type="BioGRID-ORCS" id="55676">
    <property type="hits" value="11 hits in 1162 CRISPR screens"/>
</dbReference>
<dbReference type="ChiTaRS" id="SLC30A6">
    <property type="organism name" value="human"/>
</dbReference>
<dbReference type="GenomeRNAi" id="55676"/>
<dbReference type="Pharos" id="Q6NXT4">
    <property type="development level" value="Tbio"/>
</dbReference>
<dbReference type="PRO" id="PR:Q6NXT4"/>
<dbReference type="Proteomes" id="UP000005640">
    <property type="component" value="Chromosome 2"/>
</dbReference>
<dbReference type="RNAct" id="Q6NXT4">
    <property type="molecule type" value="protein"/>
</dbReference>
<dbReference type="Bgee" id="ENSG00000152683">
    <property type="expression patterns" value="Expressed in left ventricle myocardium and 183 other cell types or tissues"/>
</dbReference>
<dbReference type="ExpressionAtlas" id="Q6NXT4">
    <property type="expression patterns" value="baseline and differential"/>
</dbReference>
<dbReference type="GO" id="GO:0005794">
    <property type="term" value="C:Golgi apparatus"/>
    <property type="evidence" value="ECO:0000314"/>
    <property type="project" value="BHF-UCL"/>
</dbReference>
<dbReference type="GO" id="GO:0032588">
    <property type="term" value="C:trans-Golgi network membrane"/>
    <property type="evidence" value="ECO:0000314"/>
    <property type="project" value="UniProtKB"/>
</dbReference>
<dbReference type="GO" id="GO:0015297">
    <property type="term" value="F:antiporter activity"/>
    <property type="evidence" value="ECO:0007669"/>
    <property type="project" value="UniProtKB-KW"/>
</dbReference>
<dbReference type="GO" id="GO:0005385">
    <property type="term" value="F:zinc ion transmembrane transporter activity"/>
    <property type="evidence" value="ECO:0000314"/>
    <property type="project" value="UniProtKB"/>
</dbReference>
<dbReference type="GO" id="GO:0071579">
    <property type="term" value="P:regulation of zinc ion transport"/>
    <property type="evidence" value="ECO:0000314"/>
    <property type="project" value="UniProtKB"/>
</dbReference>
<dbReference type="GO" id="GO:1904257">
    <property type="term" value="P:zinc ion import into Golgi lumen"/>
    <property type="evidence" value="ECO:0000314"/>
    <property type="project" value="UniProtKB"/>
</dbReference>
<dbReference type="GO" id="GO:0006829">
    <property type="term" value="P:zinc ion transport"/>
    <property type="evidence" value="ECO:0000318"/>
    <property type="project" value="GO_Central"/>
</dbReference>
<dbReference type="FunFam" id="1.20.1510.10:FF:000009">
    <property type="entry name" value="zinc transporter 6 isoform X1"/>
    <property type="match status" value="1"/>
</dbReference>
<dbReference type="Gene3D" id="1.20.1510.10">
    <property type="entry name" value="Cation efflux protein transmembrane domain"/>
    <property type="match status" value="1"/>
</dbReference>
<dbReference type="InterPro" id="IPR002524">
    <property type="entry name" value="Cation_efflux"/>
</dbReference>
<dbReference type="InterPro" id="IPR027469">
    <property type="entry name" value="Cation_efflux_TMD_sf"/>
</dbReference>
<dbReference type="InterPro" id="IPR052005">
    <property type="entry name" value="CDF_SLC30A"/>
</dbReference>
<dbReference type="NCBIfam" id="TIGR01297">
    <property type="entry name" value="CDF"/>
    <property type="match status" value="1"/>
</dbReference>
<dbReference type="PANTHER" id="PTHR46531">
    <property type="entry name" value="ZINC TRANSPORTER 6"/>
    <property type="match status" value="1"/>
</dbReference>
<dbReference type="PANTHER" id="PTHR46531:SF1">
    <property type="entry name" value="ZINC TRANSPORTER 6"/>
    <property type="match status" value="1"/>
</dbReference>
<dbReference type="Pfam" id="PF01545">
    <property type="entry name" value="Cation_efflux"/>
    <property type="match status" value="1"/>
</dbReference>
<dbReference type="SUPFAM" id="SSF161111">
    <property type="entry name" value="Cation efflux protein transmembrane domain-like"/>
    <property type="match status" value="1"/>
</dbReference>
<evidence type="ECO:0000255" key="1"/>
<evidence type="ECO:0000256" key="2">
    <source>
        <dbReference type="SAM" id="MobiDB-lite"/>
    </source>
</evidence>
<evidence type="ECO:0000269" key="3">
    <source>
    </source>
</evidence>
<evidence type="ECO:0000269" key="4">
    <source>
    </source>
</evidence>
<evidence type="ECO:0000269" key="5">
    <source>
    </source>
</evidence>
<evidence type="ECO:0000269" key="6">
    <source>
    </source>
</evidence>
<evidence type="ECO:0000269" key="7">
    <source>
    </source>
</evidence>
<evidence type="ECO:0000269" key="8">
    <source>
    </source>
</evidence>
<evidence type="ECO:0000303" key="9">
    <source>
    </source>
</evidence>
<evidence type="ECO:0000303" key="10">
    <source>
    </source>
</evidence>
<evidence type="ECO:0000303" key="11">
    <source>
    </source>
</evidence>
<evidence type="ECO:0000303" key="12">
    <source>
    </source>
</evidence>
<evidence type="ECO:0000305" key="13"/>
<evidence type="ECO:0000305" key="14">
    <source>
    </source>
</evidence>
<evidence type="ECO:0000312" key="15">
    <source>
        <dbReference type="HGNC" id="HGNC:19305"/>
    </source>
</evidence>
<sequence>MGTIHLFRKPQRSFFGKLLREFRLVAADRRSWKILLFGVINLICTGFLLMWCSSTNSIALTAYTYLTIFDLFSLMTCLISYWVTLRKPSPVYSFGFERLEVLAVFASTVLAQLGALFILKESAERFLEQPEIHTGRLLVGTFVALCFNLFTMLSIRNKPFAYVSEAASTSWLQEHVADLSRSLCGIIPGLSSIFLPRMNPFVLIDLAGAFALCITYMLIEINNYFAVDTASAIAIALMTFGTMYPMSVYSGKVLLQTTPPHVIGQLDKLIREVSTLDGVLEVRNEHFWTLGFGSLAGSVHVRIRRDANEQMVLAHVTNRLYTLVSTLTVQIFKDDWIRPALLSGPVAANVLNFSDHHVIPMPLLKGTDDLNPVTSTPAKPSSPPPEFSFNTPGKNVNPVILLNTQTRPYGFGLNHGHTPYSSMLNQGLGVPGIGATQGLRTGFTNIPSRYGTNNRIGQPRP</sequence>
<comment type="function">
    <text evidence="4 6 7 8">Has probably no intrinsic transporter activity but together with SLC30A5 forms a functional zinc ion:proton antiporter heterodimer, mediating zinc entry into the lumen of organelles along the secretory pathway (PubMed:15994300, PubMed:19366695, PubMed:19759014). As part of that zinc ion:proton antiporter, contributes to zinc ion homeostasis within the early secretory pathway and regulates the activation and folding of enzymes like alkaline phosphatases and enzymes involved in phosphatidylinositol glycan anchor biosynthesis (PubMed:15994300, PubMed:19759014, PubMed:35525268).</text>
</comment>
<comment type="subunit">
    <text evidence="4 6 7">Heterodimer with SLC30A5; form a functional zinc ion transmembrane transporter.</text>
</comment>
<comment type="interaction">
    <interactant intactId="EBI-2849005">
        <id>Q6NXT4</id>
    </interactant>
    <interactant intactId="EBI-11337878">
        <id>Q8TAD4</id>
        <label>SLC30A5</label>
    </interactant>
    <organismsDiffer>false</organismsDiffer>
    <experiments>14</experiments>
</comment>
<comment type="interaction">
    <interactant intactId="EBI-13046630">
        <id>Q6NXT4-4</id>
    </interactant>
    <interactant intactId="EBI-2880244">
        <id>Q6PKX4</id>
        <label>DOK6</label>
    </interactant>
    <organismsDiffer>false</organismsDiffer>
    <experiments>3</experiments>
</comment>
<comment type="subcellular location">
    <subcellularLocation>
        <location evidence="6">Golgi apparatus</location>
        <location evidence="6">trans-Golgi network membrane</location>
        <topology evidence="1">Multi-pass membrane protein</topology>
    </subcellularLocation>
</comment>
<comment type="alternative products">
    <event type="alternative splicing"/>
    <isoform>
        <id>Q6NXT4-1</id>
        <name>1</name>
        <sequence type="displayed"/>
    </isoform>
    <isoform>
        <id>Q6NXT4-2</id>
        <name>2</name>
        <sequence type="described" ref="VSP_029861"/>
    </isoform>
    <isoform>
        <id>Q6NXT4-4</id>
        <name>4</name>
        <sequence type="described" ref="VSP_045198"/>
    </isoform>
    <isoform>
        <id>Q6NXT4-3</id>
        <name>3</name>
        <sequence type="described" ref="VSP_029862"/>
    </isoform>
</comment>
<comment type="tissue specificity">
    <text evidence="3 5">Expressed in brain; especially in cerebellum, hippocampus, parahippocampal gyrus, superior and middle temporal gyrus. Also expressed in B-cells, colon, eye, and lung. Lower expression was present in bone, brain, cervix, ear, heart, kidney, muscle, nerve, pancreas, prostate, skin, stomach, and testis.</text>
</comment>
<comment type="similarity">
    <text evidence="13">Belongs to the cation diffusion facilitator (CDF) transporter (TC 2.A.4) family. SLC30A subfamily.</text>
</comment>
<comment type="caution">
    <text evidence="7">Hydrophilic histidine residues that participate to zinc binding in transporters of the family are not conserved in SLC30A6.</text>
</comment>
<comment type="sequence caution" evidence="13">
    <conflict type="erroneous initiation">
        <sequence resource="EMBL-CDS" id="AAH32525"/>
    </conflict>
</comment>
<accession>Q6NXT4</accession>
<accession>A5YM45</accession>
<accession>B7Z901</accession>
<accession>Q8N5C9</accession>
<accession>Q96NC3</accession>
<keyword id="KW-0025">Alternative splicing</keyword>
<keyword id="KW-0050">Antiport</keyword>
<keyword id="KW-0333">Golgi apparatus</keyword>
<keyword id="KW-0406">Ion transport</keyword>
<keyword id="KW-0472">Membrane</keyword>
<keyword id="KW-1267">Proteomics identification</keyword>
<keyword id="KW-1185">Reference proteome</keyword>
<keyword id="KW-0812">Transmembrane</keyword>
<keyword id="KW-1133">Transmembrane helix</keyword>
<keyword id="KW-0813">Transport</keyword>
<keyword id="KW-0862">Zinc</keyword>
<keyword id="KW-0864">Zinc transport</keyword>
<feature type="chain" id="PRO_0000312573" description="Zinc transporter 6">
    <location>
        <begin position="1"/>
        <end position="461"/>
    </location>
</feature>
<feature type="topological domain" description="Cytoplasmic" evidence="1">
    <location>
        <begin position="1"/>
        <end position="33"/>
    </location>
</feature>
<feature type="transmembrane region" description="Helical" evidence="1">
    <location>
        <begin position="34"/>
        <end position="54"/>
    </location>
</feature>
<feature type="topological domain" description="Extracellular" evidence="1">
    <location>
        <begin position="55"/>
        <end position="64"/>
    </location>
</feature>
<feature type="transmembrane region" description="Helical" evidence="1">
    <location>
        <begin position="65"/>
        <end position="85"/>
    </location>
</feature>
<feature type="topological domain" description="Cytoplasmic" evidence="1">
    <location>
        <begin position="86"/>
        <end position="98"/>
    </location>
</feature>
<feature type="transmembrane region" description="Helical" evidence="1">
    <location>
        <begin position="99"/>
        <end position="119"/>
    </location>
</feature>
<feature type="topological domain" description="Extracellular" evidence="1">
    <location>
        <begin position="120"/>
        <end position="134"/>
    </location>
</feature>
<feature type="transmembrane region" description="Helical" evidence="1">
    <location>
        <begin position="135"/>
        <end position="155"/>
    </location>
</feature>
<feature type="topological domain" description="Cytoplasmic" evidence="1">
    <location>
        <begin position="156"/>
        <end position="200"/>
    </location>
</feature>
<feature type="transmembrane region" description="Helical" evidence="1">
    <location>
        <begin position="201"/>
        <end position="221"/>
    </location>
</feature>
<feature type="topological domain" description="Extracellular" evidence="1">
    <location>
        <begin position="222"/>
        <end position="223"/>
    </location>
</feature>
<feature type="transmembrane region" description="Helical" evidence="1">
    <location>
        <begin position="224"/>
        <end position="244"/>
    </location>
</feature>
<feature type="topological domain" description="Cytoplasmic" evidence="1">
    <location>
        <begin position="245"/>
        <end position="461"/>
    </location>
</feature>
<feature type="region of interest" description="Disordered" evidence="2">
    <location>
        <begin position="371"/>
        <end position="392"/>
    </location>
</feature>
<feature type="splice variant" id="VSP_045198" description="In isoform 4." evidence="9">
    <original>MGTIHLFRKPQRSFFGKLLREFRLVAADRR</original>
    <variation>M</variation>
    <location>
        <begin position="1"/>
        <end position="30"/>
    </location>
</feature>
<feature type="splice variant" id="VSP_029861" description="In isoform 2." evidence="10">
    <original>F</original>
    <variation>FRDGVSPFWLGWSQTPDLKWSTHLGLPKCWDNRRELPCLSN</variation>
    <location>
        <position position="72"/>
    </location>
</feature>
<feature type="splice variant" id="VSP_029862" description="In isoform 3." evidence="12">
    <location>
        <begin position="273"/>
        <end position="295"/>
    </location>
</feature>
<feature type="mutagenesis site" description="No effect on heterodimer formation with SLC30A5 and no effect on zinc transport; when associated with H-201." evidence="7">
    <original>L</original>
    <variation>H</variation>
    <location>
        <position position="66"/>
    </location>
</feature>
<feature type="mutagenesis site" description="No effect on heterodimer formation with SLC30A5 and no effect on zinc transport; when associated with A-205." evidence="7">
    <original>D</original>
    <variation>A</variation>
    <location>
        <position position="70"/>
    </location>
</feature>
<feature type="mutagenesis site" description="No effect on heterodimer formation with SLC30A5 and no effect on zinc transport; when associated with H-66." evidence="7">
    <original>F</original>
    <variation>H</variation>
    <location>
        <position position="201"/>
    </location>
</feature>
<feature type="mutagenesis site" description="No effect on heterodimer formation with SLC30A5 and no effect on zinc transport; when associated with A-70." evidence="7">
    <original>D</original>
    <variation>A</variation>
    <location>
        <position position="205"/>
    </location>
</feature>
<feature type="sequence conflict" description="In Ref. 5; AAH32525." evidence="13" ref="5">
    <original>MN</original>
    <variation>TR</variation>
    <location>
        <begin position="198"/>
        <end position="199"/>
    </location>
</feature>
<feature type="sequence conflict" description="In Ref. 5; AAH66903." evidence="13" ref="5">
    <original>N</original>
    <variation>S</variation>
    <location>
        <position position="454"/>
    </location>
</feature>
<organism>
    <name type="scientific">Homo sapiens</name>
    <name type="common">Human</name>
    <dbReference type="NCBI Taxonomy" id="9606"/>
    <lineage>
        <taxon>Eukaryota</taxon>
        <taxon>Metazoa</taxon>
        <taxon>Chordata</taxon>
        <taxon>Craniata</taxon>
        <taxon>Vertebrata</taxon>
        <taxon>Euteleostomi</taxon>
        <taxon>Mammalia</taxon>
        <taxon>Eutheria</taxon>
        <taxon>Euarchontoglires</taxon>
        <taxon>Primates</taxon>
        <taxon>Haplorrhini</taxon>
        <taxon>Catarrhini</taxon>
        <taxon>Hominidae</taxon>
        <taxon>Homo</taxon>
    </lineage>
</organism>
<protein>
    <recommendedName>
        <fullName evidence="14">Zinc transporter 6</fullName>
        <shortName>ZnT-6</shortName>
    </recommendedName>
    <alternativeName>
        <fullName evidence="15">Solute carrier family 30 member 6</fullName>
    </alternativeName>
</protein>
<reference key="1">
    <citation type="journal article" date="2004" name="Nat. Genet.">
        <title>Complete sequencing and characterization of 21,243 full-length human cDNAs.</title>
        <authorList>
            <person name="Ota T."/>
            <person name="Suzuki Y."/>
            <person name="Nishikawa T."/>
            <person name="Otsuki T."/>
            <person name="Sugiyama T."/>
            <person name="Irie R."/>
            <person name="Wakamatsu A."/>
            <person name="Hayashi K."/>
            <person name="Sato H."/>
            <person name="Nagai K."/>
            <person name="Kimura K."/>
            <person name="Makita H."/>
            <person name="Sekine M."/>
            <person name="Obayashi M."/>
            <person name="Nishi T."/>
            <person name="Shibahara T."/>
            <person name="Tanaka T."/>
            <person name="Ishii S."/>
            <person name="Yamamoto J."/>
            <person name="Saito K."/>
            <person name="Kawai Y."/>
            <person name="Isono Y."/>
            <person name="Nakamura Y."/>
            <person name="Nagahari K."/>
            <person name="Murakami K."/>
            <person name="Yasuda T."/>
            <person name="Iwayanagi T."/>
            <person name="Wagatsuma M."/>
            <person name="Shiratori A."/>
            <person name="Sudo H."/>
            <person name="Hosoiri T."/>
            <person name="Kaku Y."/>
            <person name="Kodaira H."/>
            <person name="Kondo H."/>
            <person name="Sugawara M."/>
            <person name="Takahashi M."/>
            <person name="Kanda K."/>
            <person name="Yokoi T."/>
            <person name="Furuya T."/>
            <person name="Kikkawa E."/>
            <person name="Omura Y."/>
            <person name="Abe K."/>
            <person name="Kamihara K."/>
            <person name="Katsuta N."/>
            <person name="Sato K."/>
            <person name="Tanikawa M."/>
            <person name="Yamazaki M."/>
            <person name="Ninomiya K."/>
            <person name="Ishibashi T."/>
            <person name="Yamashita H."/>
            <person name="Murakawa K."/>
            <person name="Fujimori K."/>
            <person name="Tanai H."/>
            <person name="Kimata M."/>
            <person name="Watanabe M."/>
            <person name="Hiraoka S."/>
            <person name="Chiba Y."/>
            <person name="Ishida S."/>
            <person name="Ono Y."/>
            <person name="Takiguchi S."/>
            <person name="Watanabe S."/>
            <person name="Yosida M."/>
            <person name="Hotuta T."/>
            <person name="Kusano J."/>
            <person name="Kanehori K."/>
            <person name="Takahashi-Fujii A."/>
            <person name="Hara H."/>
            <person name="Tanase T.-O."/>
            <person name="Nomura Y."/>
            <person name="Togiya S."/>
            <person name="Komai F."/>
            <person name="Hara R."/>
            <person name="Takeuchi K."/>
            <person name="Arita M."/>
            <person name="Imose N."/>
            <person name="Musashino K."/>
            <person name="Yuuki H."/>
            <person name="Oshima A."/>
            <person name="Sasaki N."/>
            <person name="Aotsuka S."/>
            <person name="Yoshikawa Y."/>
            <person name="Matsunawa H."/>
            <person name="Ichihara T."/>
            <person name="Shiohata N."/>
            <person name="Sano S."/>
            <person name="Moriya S."/>
            <person name="Momiyama H."/>
            <person name="Satoh N."/>
            <person name="Takami S."/>
            <person name="Terashima Y."/>
            <person name="Suzuki O."/>
            <person name="Nakagawa S."/>
            <person name="Senoh A."/>
            <person name="Mizoguchi H."/>
            <person name="Goto Y."/>
            <person name="Shimizu F."/>
            <person name="Wakebe H."/>
            <person name="Hishigaki H."/>
            <person name="Watanabe T."/>
            <person name="Sugiyama A."/>
            <person name="Takemoto M."/>
            <person name="Kawakami B."/>
            <person name="Yamazaki M."/>
            <person name="Watanabe K."/>
            <person name="Kumagai A."/>
            <person name="Itakura S."/>
            <person name="Fukuzumi Y."/>
            <person name="Fujimori Y."/>
            <person name="Komiyama M."/>
            <person name="Tashiro H."/>
            <person name="Tanigami A."/>
            <person name="Fujiwara T."/>
            <person name="Ono T."/>
            <person name="Yamada K."/>
            <person name="Fujii Y."/>
            <person name="Ozaki K."/>
            <person name="Hirao M."/>
            <person name="Ohmori Y."/>
            <person name="Kawabata A."/>
            <person name="Hikiji T."/>
            <person name="Kobatake N."/>
            <person name="Inagaki H."/>
            <person name="Ikema Y."/>
            <person name="Okamoto S."/>
            <person name="Okitani R."/>
            <person name="Kawakami T."/>
            <person name="Noguchi S."/>
            <person name="Itoh T."/>
            <person name="Shigeta K."/>
            <person name="Senba T."/>
            <person name="Matsumura K."/>
            <person name="Nakajima Y."/>
            <person name="Mizuno T."/>
            <person name="Morinaga M."/>
            <person name="Sasaki M."/>
            <person name="Togashi T."/>
            <person name="Oyama M."/>
            <person name="Hata H."/>
            <person name="Watanabe M."/>
            <person name="Komatsu T."/>
            <person name="Mizushima-Sugano J."/>
            <person name="Satoh T."/>
            <person name="Shirai Y."/>
            <person name="Takahashi Y."/>
            <person name="Nakagawa K."/>
            <person name="Okumura K."/>
            <person name="Nagase T."/>
            <person name="Nomura N."/>
            <person name="Kikuchi H."/>
            <person name="Masuho Y."/>
            <person name="Yamashita R."/>
            <person name="Nakai K."/>
            <person name="Yada T."/>
            <person name="Nakamura Y."/>
            <person name="Ohara O."/>
            <person name="Isogai T."/>
            <person name="Sugano S."/>
        </authorList>
    </citation>
    <scope>NUCLEOTIDE SEQUENCE [LARGE SCALE MRNA] (ISOFORMS 1 AND 4)</scope>
    <source>
        <tissue>Trachea</tissue>
    </source>
</reference>
<reference key="2">
    <citation type="journal article" date="2007" name="BMC Genomics">
        <title>The full-ORF clone resource of the German cDNA consortium.</title>
        <authorList>
            <person name="Bechtel S."/>
            <person name="Rosenfelder H."/>
            <person name="Duda A."/>
            <person name="Schmidt C.P."/>
            <person name="Ernst U."/>
            <person name="Wellenreuther R."/>
            <person name="Mehrle A."/>
            <person name="Schuster C."/>
            <person name="Bahr A."/>
            <person name="Bloecker H."/>
            <person name="Heubner D."/>
            <person name="Hoerlein A."/>
            <person name="Michel G."/>
            <person name="Wedler H."/>
            <person name="Koehrer K."/>
            <person name="Ottenwaelder B."/>
            <person name="Poustka A."/>
            <person name="Wiemann S."/>
            <person name="Schupp I."/>
        </authorList>
    </citation>
    <scope>NUCLEOTIDE SEQUENCE [LARGE SCALE MRNA] (ISOFORMS 1 AND 3)</scope>
    <source>
        <tissue>Seminoma</tissue>
        <tissue>Uterus</tissue>
    </source>
</reference>
<reference key="3">
    <citation type="journal article" date="2005" name="Nature">
        <title>Generation and annotation of the DNA sequences of human chromosomes 2 and 4.</title>
        <authorList>
            <person name="Hillier L.W."/>
            <person name="Graves T.A."/>
            <person name="Fulton R.S."/>
            <person name="Fulton L.A."/>
            <person name="Pepin K.H."/>
            <person name="Minx P."/>
            <person name="Wagner-McPherson C."/>
            <person name="Layman D."/>
            <person name="Wylie K."/>
            <person name="Sekhon M."/>
            <person name="Becker M.C."/>
            <person name="Fewell G.A."/>
            <person name="Delehaunty K.D."/>
            <person name="Miner T.L."/>
            <person name="Nash W.E."/>
            <person name="Kremitzki C."/>
            <person name="Oddy L."/>
            <person name="Du H."/>
            <person name="Sun H."/>
            <person name="Bradshaw-Cordum H."/>
            <person name="Ali J."/>
            <person name="Carter J."/>
            <person name="Cordes M."/>
            <person name="Harris A."/>
            <person name="Isak A."/>
            <person name="van Brunt A."/>
            <person name="Nguyen C."/>
            <person name="Du F."/>
            <person name="Courtney L."/>
            <person name="Kalicki J."/>
            <person name="Ozersky P."/>
            <person name="Abbott S."/>
            <person name="Armstrong J."/>
            <person name="Belter E.A."/>
            <person name="Caruso L."/>
            <person name="Cedroni M."/>
            <person name="Cotton M."/>
            <person name="Davidson T."/>
            <person name="Desai A."/>
            <person name="Elliott G."/>
            <person name="Erb T."/>
            <person name="Fronick C."/>
            <person name="Gaige T."/>
            <person name="Haakenson W."/>
            <person name="Haglund K."/>
            <person name="Holmes A."/>
            <person name="Harkins R."/>
            <person name="Kim K."/>
            <person name="Kruchowski S.S."/>
            <person name="Strong C.M."/>
            <person name="Grewal N."/>
            <person name="Goyea E."/>
            <person name="Hou S."/>
            <person name="Levy A."/>
            <person name="Martinka S."/>
            <person name="Mead K."/>
            <person name="McLellan M.D."/>
            <person name="Meyer R."/>
            <person name="Randall-Maher J."/>
            <person name="Tomlinson C."/>
            <person name="Dauphin-Kohlberg S."/>
            <person name="Kozlowicz-Reilly A."/>
            <person name="Shah N."/>
            <person name="Swearengen-Shahid S."/>
            <person name="Snider J."/>
            <person name="Strong J.T."/>
            <person name="Thompson J."/>
            <person name="Yoakum M."/>
            <person name="Leonard S."/>
            <person name="Pearman C."/>
            <person name="Trani L."/>
            <person name="Radionenko M."/>
            <person name="Waligorski J.E."/>
            <person name="Wang C."/>
            <person name="Rock S.M."/>
            <person name="Tin-Wollam A.-M."/>
            <person name="Maupin R."/>
            <person name="Latreille P."/>
            <person name="Wendl M.C."/>
            <person name="Yang S.-P."/>
            <person name="Pohl C."/>
            <person name="Wallis J.W."/>
            <person name="Spieth J."/>
            <person name="Bieri T.A."/>
            <person name="Berkowicz N."/>
            <person name="Nelson J.O."/>
            <person name="Osborne J."/>
            <person name="Ding L."/>
            <person name="Meyer R."/>
            <person name="Sabo A."/>
            <person name="Shotland Y."/>
            <person name="Sinha P."/>
            <person name="Wohldmann P.E."/>
            <person name="Cook L.L."/>
            <person name="Hickenbotham M.T."/>
            <person name="Eldred J."/>
            <person name="Williams D."/>
            <person name="Jones T.A."/>
            <person name="She X."/>
            <person name="Ciccarelli F.D."/>
            <person name="Izaurralde E."/>
            <person name="Taylor J."/>
            <person name="Schmutz J."/>
            <person name="Myers R.M."/>
            <person name="Cox D.R."/>
            <person name="Huang X."/>
            <person name="McPherson J.D."/>
            <person name="Mardis E.R."/>
            <person name="Clifton S.W."/>
            <person name="Warren W.C."/>
            <person name="Chinwalla A.T."/>
            <person name="Eddy S.R."/>
            <person name="Marra M.A."/>
            <person name="Ovcharenko I."/>
            <person name="Furey T.S."/>
            <person name="Miller W."/>
            <person name="Eichler E.E."/>
            <person name="Bork P."/>
            <person name="Suyama M."/>
            <person name="Torrents D."/>
            <person name="Waterston R.H."/>
            <person name="Wilson R.K."/>
        </authorList>
    </citation>
    <scope>NUCLEOTIDE SEQUENCE [LARGE SCALE GENOMIC DNA]</scope>
</reference>
<reference key="4">
    <citation type="submission" date="2005-09" db="EMBL/GenBank/DDBJ databases">
        <authorList>
            <person name="Mural R.J."/>
            <person name="Istrail S."/>
            <person name="Sutton G.G."/>
            <person name="Florea L."/>
            <person name="Halpern A.L."/>
            <person name="Mobarry C.M."/>
            <person name="Lippert R."/>
            <person name="Walenz B."/>
            <person name="Shatkay H."/>
            <person name="Dew I."/>
            <person name="Miller J.R."/>
            <person name="Flanigan M.J."/>
            <person name="Edwards N.J."/>
            <person name="Bolanos R."/>
            <person name="Fasulo D."/>
            <person name="Halldorsson B.V."/>
            <person name="Hannenhalli S."/>
            <person name="Turner R."/>
            <person name="Yooseph S."/>
            <person name="Lu F."/>
            <person name="Nusskern D.R."/>
            <person name="Shue B.C."/>
            <person name="Zheng X.H."/>
            <person name="Zhong F."/>
            <person name="Delcher A.L."/>
            <person name="Huson D.H."/>
            <person name="Kravitz S.A."/>
            <person name="Mouchard L."/>
            <person name="Reinert K."/>
            <person name="Remington K.A."/>
            <person name="Clark A.G."/>
            <person name="Waterman M.S."/>
            <person name="Eichler E.E."/>
            <person name="Adams M.D."/>
            <person name="Hunkapiller M.W."/>
            <person name="Myers E.W."/>
            <person name="Venter J.C."/>
        </authorList>
    </citation>
    <scope>NUCLEOTIDE SEQUENCE [LARGE SCALE GENOMIC DNA]</scope>
</reference>
<reference key="5">
    <citation type="journal article" date="2004" name="Genome Res.">
        <title>The status, quality, and expansion of the NIH full-length cDNA project: the Mammalian Gene Collection (MGC).</title>
        <authorList>
            <consortium name="The MGC Project Team"/>
        </authorList>
    </citation>
    <scope>NUCLEOTIDE SEQUENCE [LARGE SCALE MRNA] (ISOFORM 2)</scope>
    <source>
        <tissue>Brain</tissue>
        <tissue>Eye</tissue>
    </source>
</reference>
<reference key="6">
    <citation type="journal article" date="2004" name="BMC Genomics">
        <title>In silico identification and expression of SLC30 family genes: an expressed sequence tag data mining strategy for the characterization of zinc transporters' tissue expression.</title>
        <authorList>
            <person name="Seve M."/>
            <person name="Chimienti F."/>
            <person name="Devergnas S."/>
            <person name="Favier A."/>
        </authorList>
    </citation>
    <scope>TISSUE SPECIFICITY</scope>
</reference>
<reference key="7">
    <citation type="journal article" date="2005" name="J. Biol. Chem.">
        <title>Two different zinc transport complexes of cation diffusion facilitator proteins localized in the secretory pathway operate to activate alkaline phosphatases in vertebrate cells.</title>
        <authorList>
            <person name="Suzuki T."/>
            <person name="Ishihara K."/>
            <person name="Migaki H."/>
            <person name="Ishihara K."/>
            <person name="Nagao M."/>
            <person name="Yamaguchi-Iwai Y."/>
            <person name="Kambe T."/>
        </authorList>
    </citation>
    <scope>FUNCTION</scope>
    <scope>SUBUNIT</scope>
</reference>
<reference key="8">
    <citation type="journal article" date="2006" name="Neuroscience">
        <title>Altered expression of zinc transporters-4 and -6 in mild cognitive impairment, early and late Alzheimer's disease brain.</title>
        <authorList>
            <person name="Smith J.L."/>
            <person name="Xiong S."/>
            <person name="Markesbery W.R."/>
            <person name="Lovell M.A."/>
        </authorList>
    </citation>
    <scope>TISSUE SPECIFICITY</scope>
</reference>
<reference key="9">
    <citation type="journal article" date="2008" name="Mol. Cell">
        <title>Kinase-selective enrichment enables quantitative phosphoproteomics of the kinome across the cell cycle.</title>
        <authorList>
            <person name="Daub H."/>
            <person name="Olsen J.V."/>
            <person name="Bairlein M."/>
            <person name="Gnad F."/>
            <person name="Oppermann F.S."/>
            <person name="Korner R."/>
            <person name="Greff Z."/>
            <person name="Keri G."/>
            <person name="Stemmann O."/>
            <person name="Mann M."/>
        </authorList>
    </citation>
    <scope>IDENTIFICATION BY MASS SPECTROMETRY [LARGE SCALE ANALYSIS]</scope>
    <source>
        <tissue>Cervix carcinoma</tissue>
    </source>
</reference>
<reference key="10">
    <citation type="journal article" date="2008" name="Proc. Natl. Acad. Sci. U.S.A.">
        <title>A quantitative atlas of mitotic phosphorylation.</title>
        <authorList>
            <person name="Dephoure N."/>
            <person name="Zhou C."/>
            <person name="Villen J."/>
            <person name="Beausoleil S.A."/>
            <person name="Bakalarski C.E."/>
            <person name="Elledge S.J."/>
            <person name="Gygi S.P."/>
        </authorList>
    </citation>
    <scope>IDENTIFICATION BY MASS SPECTROMETRY [LARGE SCALE ANALYSIS]</scope>
    <source>
        <tissue>Cervix carcinoma</tissue>
    </source>
</reference>
<reference key="11">
    <citation type="journal article" date="2009" name="J. Biol. Chem.">
        <title>Identification of the Zn2+ binding site and mode of operation of a mammalian Zn2+ transporter.</title>
        <authorList>
            <person name="Ohana E."/>
            <person name="Hoch E."/>
            <person name="Keasar C."/>
            <person name="Kambe T."/>
            <person name="Yifrach O."/>
            <person name="Hershfinkel M."/>
            <person name="Sekler I."/>
        </authorList>
    </citation>
    <scope>FUNCTION</scope>
    <scope>SUBUNIT</scope>
    <scope>SUBCELLULAR LOCATION</scope>
</reference>
<reference key="12">
    <citation type="journal article" date="2009" name="J. Biol. Chem.">
        <title>Demonstration and characterization of the heterodimerization of ZnT5 and ZnT6 in the early secretory pathway.</title>
        <authorList>
            <person name="Fukunaka A."/>
            <person name="Suzuki T."/>
            <person name="Kurokawa Y."/>
            <person name="Yamazaki T."/>
            <person name="Fujiwara N."/>
            <person name="Ishihara K."/>
            <person name="Migaki H."/>
            <person name="Okumura K."/>
            <person name="Masuda S."/>
            <person name="Yamaguchi-Iwai Y."/>
            <person name="Nagao M."/>
            <person name="Kambe T."/>
        </authorList>
    </citation>
    <scope>FUNCTION</scope>
    <scope>SUBUNIT</scope>
    <scope>CAUTION</scope>
    <scope>MUTAGENESIS OF LEU-66; ASP-70; PHE-201 AND ASP-205</scope>
</reference>
<reference key="13">
    <citation type="journal article" date="2013" name="J. Proteome Res.">
        <title>Toward a comprehensive characterization of a human cancer cell phosphoproteome.</title>
        <authorList>
            <person name="Zhou H."/>
            <person name="Di Palma S."/>
            <person name="Preisinger C."/>
            <person name="Peng M."/>
            <person name="Polat A.N."/>
            <person name="Heck A.J."/>
            <person name="Mohammed S."/>
        </authorList>
    </citation>
    <scope>IDENTIFICATION BY MASS SPECTROMETRY [LARGE SCALE ANALYSIS]</scope>
    <source>
        <tissue>Erythroleukemia</tissue>
    </source>
</reference>
<reference key="14">
    <citation type="journal article" date="2022" name="J. Biol. Chem.">
        <title>Zinc transport via ZNT5-6 and ZNT7 is critical for cell surface glycosylphosphatidylinositol-anchored protein expression.</title>
        <authorList>
            <person name="Wagatsuma T."/>
            <person name="Shimotsuma K."/>
            <person name="Sogo A."/>
            <person name="Sato R."/>
            <person name="Kubo N."/>
            <person name="Ueda S."/>
            <person name="Uchida Y."/>
            <person name="Kinoshita M."/>
            <person name="Kambe T."/>
        </authorList>
    </citation>
    <scope>FUNCTION</scope>
</reference>
<gene>
    <name evidence="15" type="primary">SLC30A6</name>
    <name evidence="11" type="synonym">ZNT6</name>
</gene>